<evidence type="ECO:0000255" key="1">
    <source>
        <dbReference type="HAMAP-Rule" id="MF_01008"/>
    </source>
</evidence>
<evidence type="ECO:0000255" key="2">
    <source>
        <dbReference type="PROSITE-ProRule" id="PRU01076"/>
    </source>
</evidence>
<protein>
    <recommendedName>
        <fullName>Transcriptional regulator MraZ</fullName>
    </recommendedName>
</protein>
<sequence length="142" mass="16056">MFLGTHTPRLDDKGRLILPAKFRDELAGGVVITKGQERCLYVFPTPEFQHIADQLRAQPMTHKAARAYSRVFFASAHDEVPDKQGRVTIPGHLREYAALDRDLVVIGAHTRVEIWDRVAWESYLAESEDEFADIEEGVLPGL</sequence>
<accession>A4X9S4</accession>
<name>MRAZ_SALTO</name>
<feature type="chain" id="PRO_1000084019" description="Transcriptional regulator MraZ">
    <location>
        <begin position="1"/>
        <end position="142"/>
    </location>
</feature>
<feature type="domain" description="SpoVT-AbrB 1" evidence="2">
    <location>
        <begin position="5"/>
        <end position="47"/>
    </location>
</feature>
<feature type="domain" description="SpoVT-AbrB 2" evidence="2">
    <location>
        <begin position="76"/>
        <end position="119"/>
    </location>
</feature>
<gene>
    <name evidence="1" type="primary">mraZ</name>
    <name type="ordered locus">Strop_3221</name>
</gene>
<comment type="subunit">
    <text evidence="1">Forms oligomers.</text>
</comment>
<comment type="subcellular location">
    <subcellularLocation>
        <location evidence="1">Cytoplasm</location>
        <location evidence="1">Nucleoid</location>
    </subcellularLocation>
</comment>
<comment type="similarity">
    <text evidence="1">Belongs to the MraZ family.</text>
</comment>
<organism>
    <name type="scientific">Salinispora tropica (strain ATCC BAA-916 / DSM 44818 / JCM 13857 / NBRC 105044 / CNB-440)</name>
    <dbReference type="NCBI Taxonomy" id="369723"/>
    <lineage>
        <taxon>Bacteria</taxon>
        <taxon>Bacillati</taxon>
        <taxon>Actinomycetota</taxon>
        <taxon>Actinomycetes</taxon>
        <taxon>Micromonosporales</taxon>
        <taxon>Micromonosporaceae</taxon>
        <taxon>Salinispora</taxon>
    </lineage>
</organism>
<proteinExistence type="inferred from homology"/>
<keyword id="KW-0963">Cytoplasm</keyword>
<keyword id="KW-0238">DNA-binding</keyword>
<keyword id="KW-1185">Reference proteome</keyword>
<keyword id="KW-0677">Repeat</keyword>
<keyword id="KW-0804">Transcription</keyword>
<keyword id="KW-0805">Transcription regulation</keyword>
<reference key="1">
    <citation type="journal article" date="2007" name="Proc. Natl. Acad. Sci. U.S.A.">
        <title>Genome sequencing reveals complex secondary metabolome in the marine actinomycete Salinispora tropica.</title>
        <authorList>
            <person name="Udwary D.W."/>
            <person name="Zeigler L."/>
            <person name="Asolkar R.N."/>
            <person name="Singan V."/>
            <person name="Lapidus A."/>
            <person name="Fenical W."/>
            <person name="Jensen P.R."/>
            <person name="Moore B.S."/>
        </authorList>
    </citation>
    <scope>NUCLEOTIDE SEQUENCE [LARGE SCALE GENOMIC DNA]</scope>
    <source>
        <strain>ATCC BAA-916 / DSM 44818 / JCM 13857 / NBRC 105044 / CNB-440</strain>
    </source>
</reference>
<dbReference type="EMBL" id="CP000667">
    <property type="protein sequence ID" value="ABP55655.1"/>
    <property type="molecule type" value="Genomic_DNA"/>
</dbReference>
<dbReference type="RefSeq" id="WP_012014432.1">
    <property type="nucleotide sequence ID" value="NC_009380.1"/>
</dbReference>
<dbReference type="SMR" id="A4X9S4"/>
<dbReference type="STRING" id="369723.Strop_3221"/>
<dbReference type="KEGG" id="stp:Strop_3221"/>
<dbReference type="PATRIC" id="fig|369723.5.peg.3313"/>
<dbReference type="eggNOG" id="COG2001">
    <property type="taxonomic scope" value="Bacteria"/>
</dbReference>
<dbReference type="HOGENOM" id="CLU_107907_0_5_11"/>
<dbReference type="Proteomes" id="UP000000235">
    <property type="component" value="Chromosome"/>
</dbReference>
<dbReference type="GO" id="GO:0005737">
    <property type="term" value="C:cytoplasm"/>
    <property type="evidence" value="ECO:0007669"/>
    <property type="project" value="UniProtKB-UniRule"/>
</dbReference>
<dbReference type="GO" id="GO:0009295">
    <property type="term" value="C:nucleoid"/>
    <property type="evidence" value="ECO:0007669"/>
    <property type="project" value="UniProtKB-SubCell"/>
</dbReference>
<dbReference type="GO" id="GO:0003700">
    <property type="term" value="F:DNA-binding transcription factor activity"/>
    <property type="evidence" value="ECO:0007669"/>
    <property type="project" value="UniProtKB-UniRule"/>
</dbReference>
<dbReference type="GO" id="GO:0000976">
    <property type="term" value="F:transcription cis-regulatory region binding"/>
    <property type="evidence" value="ECO:0007669"/>
    <property type="project" value="TreeGrafter"/>
</dbReference>
<dbReference type="GO" id="GO:2000143">
    <property type="term" value="P:negative regulation of DNA-templated transcription initiation"/>
    <property type="evidence" value="ECO:0007669"/>
    <property type="project" value="TreeGrafter"/>
</dbReference>
<dbReference type="CDD" id="cd16321">
    <property type="entry name" value="MraZ_C"/>
    <property type="match status" value="1"/>
</dbReference>
<dbReference type="CDD" id="cd16320">
    <property type="entry name" value="MraZ_N"/>
    <property type="match status" value="1"/>
</dbReference>
<dbReference type="Gene3D" id="3.40.1550.20">
    <property type="entry name" value="Transcriptional regulator MraZ domain"/>
    <property type="match status" value="1"/>
</dbReference>
<dbReference type="HAMAP" id="MF_01008">
    <property type="entry name" value="MraZ"/>
    <property type="match status" value="1"/>
</dbReference>
<dbReference type="InterPro" id="IPR003444">
    <property type="entry name" value="MraZ"/>
</dbReference>
<dbReference type="InterPro" id="IPR035644">
    <property type="entry name" value="MraZ_C"/>
</dbReference>
<dbReference type="InterPro" id="IPR020603">
    <property type="entry name" value="MraZ_dom"/>
</dbReference>
<dbReference type="InterPro" id="IPR035642">
    <property type="entry name" value="MraZ_N"/>
</dbReference>
<dbReference type="InterPro" id="IPR038619">
    <property type="entry name" value="MraZ_sf"/>
</dbReference>
<dbReference type="InterPro" id="IPR007159">
    <property type="entry name" value="SpoVT-AbrB_dom"/>
</dbReference>
<dbReference type="InterPro" id="IPR037914">
    <property type="entry name" value="SpoVT-AbrB_sf"/>
</dbReference>
<dbReference type="NCBIfam" id="TIGR00242">
    <property type="entry name" value="division/cell wall cluster transcriptional repressor MraZ"/>
    <property type="match status" value="1"/>
</dbReference>
<dbReference type="PANTHER" id="PTHR34701">
    <property type="entry name" value="TRANSCRIPTIONAL REGULATOR MRAZ"/>
    <property type="match status" value="1"/>
</dbReference>
<dbReference type="PANTHER" id="PTHR34701:SF1">
    <property type="entry name" value="TRANSCRIPTIONAL REGULATOR MRAZ"/>
    <property type="match status" value="1"/>
</dbReference>
<dbReference type="Pfam" id="PF02381">
    <property type="entry name" value="MraZ"/>
    <property type="match status" value="2"/>
</dbReference>
<dbReference type="SUPFAM" id="SSF89447">
    <property type="entry name" value="AbrB/MazE/MraZ-like"/>
    <property type="match status" value="1"/>
</dbReference>
<dbReference type="PROSITE" id="PS51740">
    <property type="entry name" value="SPOVT_ABRB"/>
    <property type="match status" value="2"/>
</dbReference>